<keyword id="KW-0067">ATP-binding</keyword>
<keyword id="KW-0238">DNA-binding</keyword>
<keyword id="KW-0479">Metal-binding</keyword>
<keyword id="KW-0547">Nucleotide-binding</keyword>
<keyword id="KW-1185">Reference proteome</keyword>
<keyword id="KW-0678">Repressor</keyword>
<keyword id="KW-0804">Transcription</keyword>
<keyword id="KW-0805">Transcription regulation</keyword>
<keyword id="KW-0862">Zinc</keyword>
<keyword id="KW-0863">Zinc-finger</keyword>
<gene>
    <name evidence="1" type="primary">nrdR</name>
    <name type="ordered locus">ABC2702</name>
</gene>
<reference key="1">
    <citation type="submission" date="2003-10" db="EMBL/GenBank/DDBJ databases">
        <title>The complete genome sequence of the alkaliphilic Bacillus clausii KSM-K16.</title>
        <authorList>
            <person name="Takaki Y."/>
            <person name="Kageyama Y."/>
            <person name="Shimamura S."/>
            <person name="Suzuki H."/>
            <person name="Nishi S."/>
            <person name="Hatada Y."/>
            <person name="Kawai S."/>
            <person name="Ito S."/>
            <person name="Horikoshi K."/>
        </authorList>
    </citation>
    <scope>NUCLEOTIDE SEQUENCE [LARGE SCALE GENOMIC DNA]</scope>
    <source>
        <strain>KSM-K16</strain>
    </source>
</reference>
<dbReference type="EMBL" id="AP006627">
    <property type="protein sequence ID" value="BAD65237.1"/>
    <property type="molecule type" value="Genomic_DNA"/>
</dbReference>
<dbReference type="RefSeq" id="WP_011247545.1">
    <property type="nucleotide sequence ID" value="NC_006582.1"/>
</dbReference>
<dbReference type="SMR" id="Q5WEH3"/>
<dbReference type="STRING" id="66692.ABC2702"/>
<dbReference type="KEGG" id="bcl:ABC2702"/>
<dbReference type="eggNOG" id="COG1327">
    <property type="taxonomic scope" value="Bacteria"/>
</dbReference>
<dbReference type="HOGENOM" id="CLU_108412_0_0_9"/>
<dbReference type="OrthoDB" id="9807461at2"/>
<dbReference type="Proteomes" id="UP000001168">
    <property type="component" value="Chromosome"/>
</dbReference>
<dbReference type="GO" id="GO:0005524">
    <property type="term" value="F:ATP binding"/>
    <property type="evidence" value="ECO:0007669"/>
    <property type="project" value="UniProtKB-KW"/>
</dbReference>
<dbReference type="GO" id="GO:0003677">
    <property type="term" value="F:DNA binding"/>
    <property type="evidence" value="ECO:0007669"/>
    <property type="project" value="UniProtKB-KW"/>
</dbReference>
<dbReference type="GO" id="GO:0008270">
    <property type="term" value="F:zinc ion binding"/>
    <property type="evidence" value="ECO:0007669"/>
    <property type="project" value="UniProtKB-UniRule"/>
</dbReference>
<dbReference type="GO" id="GO:0045892">
    <property type="term" value="P:negative regulation of DNA-templated transcription"/>
    <property type="evidence" value="ECO:0007669"/>
    <property type="project" value="UniProtKB-UniRule"/>
</dbReference>
<dbReference type="HAMAP" id="MF_00440">
    <property type="entry name" value="NrdR"/>
    <property type="match status" value="1"/>
</dbReference>
<dbReference type="InterPro" id="IPR005144">
    <property type="entry name" value="ATP-cone_dom"/>
</dbReference>
<dbReference type="InterPro" id="IPR055173">
    <property type="entry name" value="NrdR-like_N"/>
</dbReference>
<dbReference type="InterPro" id="IPR003796">
    <property type="entry name" value="RNR_NrdR-like"/>
</dbReference>
<dbReference type="NCBIfam" id="TIGR00244">
    <property type="entry name" value="transcriptional regulator NrdR"/>
    <property type="match status" value="1"/>
</dbReference>
<dbReference type="PANTHER" id="PTHR30455">
    <property type="entry name" value="TRANSCRIPTIONAL REPRESSOR NRDR"/>
    <property type="match status" value="1"/>
</dbReference>
<dbReference type="PANTHER" id="PTHR30455:SF2">
    <property type="entry name" value="TRANSCRIPTIONAL REPRESSOR NRDR"/>
    <property type="match status" value="1"/>
</dbReference>
<dbReference type="Pfam" id="PF03477">
    <property type="entry name" value="ATP-cone"/>
    <property type="match status" value="1"/>
</dbReference>
<dbReference type="Pfam" id="PF22811">
    <property type="entry name" value="Zn_ribbon_NrdR"/>
    <property type="match status" value="1"/>
</dbReference>
<dbReference type="PROSITE" id="PS51161">
    <property type="entry name" value="ATP_CONE"/>
    <property type="match status" value="1"/>
</dbReference>
<organism>
    <name type="scientific">Shouchella clausii (strain KSM-K16)</name>
    <name type="common">Alkalihalobacillus clausii</name>
    <dbReference type="NCBI Taxonomy" id="66692"/>
    <lineage>
        <taxon>Bacteria</taxon>
        <taxon>Bacillati</taxon>
        <taxon>Bacillota</taxon>
        <taxon>Bacilli</taxon>
        <taxon>Bacillales</taxon>
        <taxon>Bacillaceae</taxon>
        <taxon>Shouchella</taxon>
    </lineage>
</organism>
<proteinExistence type="inferred from homology"/>
<evidence type="ECO:0000255" key="1">
    <source>
        <dbReference type="HAMAP-Rule" id="MF_00440"/>
    </source>
</evidence>
<evidence type="ECO:0000256" key="2">
    <source>
        <dbReference type="SAM" id="MobiDB-lite"/>
    </source>
</evidence>
<protein>
    <recommendedName>
        <fullName evidence="1">Transcriptional repressor NrdR</fullName>
    </recommendedName>
</protein>
<sequence length="151" mass="17900">MRCPKCQHNGTRVLDSRPSDESRSIKRRRECEKCLQRFTTYETVEERPLLIIKKDGMREEFSSDKMLRGLVRACEKRPVPLETLEKMVLDVERTLRNEGKQEVRSQDVGELVMERLAKIDDVAYVRFASVYRQFKDINVFIKELTELMNKN</sequence>
<comment type="function">
    <text evidence="1">Negatively regulates transcription of bacterial ribonucleotide reductase nrd genes and operons by binding to NrdR-boxes.</text>
</comment>
<comment type="cofactor">
    <cofactor evidence="1">
        <name>Zn(2+)</name>
        <dbReference type="ChEBI" id="CHEBI:29105"/>
    </cofactor>
    <text evidence="1">Binds 1 zinc ion.</text>
</comment>
<comment type="similarity">
    <text evidence="1">Belongs to the NrdR family.</text>
</comment>
<accession>Q5WEH3</accession>
<feature type="chain" id="PRO_0000182263" description="Transcriptional repressor NrdR">
    <location>
        <begin position="1"/>
        <end position="151"/>
    </location>
</feature>
<feature type="domain" description="ATP-cone" evidence="1">
    <location>
        <begin position="49"/>
        <end position="139"/>
    </location>
</feature>
<feature type="zinc finger region" evidence="1">
    <location>
        <begin position="3"/>
        <end position="34"/>
    </location>
</feature>
<feature type="region of interest" description="Disordered" evidence="2">
    <location>
        <begin position="1"/>
        <end position="24"/>
    </location>
</feature>
<feature type="compositionally biased region" description="Basic and acidic residues" evidence="2">
    <location>
        <begin position="14"/>
        <end position="24"/>
    </location>
</feature>
<name>NRDR_SHOC1</name>